<evidence type="ECO:0000255" key="1">
    <source>
        <dbReference type="PROSITE-ProRule" id="PRU00520"/>
    </source>
</evidence>
<evidence type="ECO:0000269" key="2">
    <source>
    </source>
</evidence>
<evidence type="ECO:0000305" key="3"/>
<evidence type="ECO:0007829" key="4">
    <source>
        <dbReference type="PDB" id="1W2I"/>
    </source>
</evidence>
<protein>
    <recommendedName>
        <fullName>Acylphosphatase</fullName>
        <ecNumber>3.6.1.7</ecNumber>
    </recommendedName>
    <alternativeName>
        <fullName>Acylphosphate phosphohydrolase</fullName>
    </alternativeName>
</protein>
<name>ACYP_PYRHO</name>
<reference key="1">
    <citation type="journal article" date="1998" name="DNA Res.">
        <title>Complete sequence and gene organization of the genome of a hyper-thermophilic archaebacterium, Pyrococcus horikoshii OT3.</title>
        <authorList>
            <person name="Kawarabayasi Y."/>
            <person name="Sawada M."/>
            <person name="Horikawa H."/>
            <person name="Haikawa Y."/>
            <person name="Hino Y."/>
            <person name="Yamamoto S."/>
            <person name="Sekine M."/>
            <person name="Baba S."/>
            <person name="Kosugi H."/>
            <person name="Hosoyama A."/>
            <person name="Nagai Y."/>
            <person name="Sakai M."/>
            <person name="Ogura K."/>
            <person name="Otsuka R."/>
            <person name="Nakazawa H."/>
            <person name="Takamiya M."/>
            <person name="Ohfuku Y."/>
            <person name="Funahashi T."/>
            <person name="Tanaka T."/>
            <person name="Kudoh Y."/>
            <person name="Yamazaki J."/>
            <person name="Kushida N."/>
            <person name="Oguchi A."/>
            <person name="Aoki K."/>
            <person name="Yoshizawa T."/>
            <person name="Nakamura Y."/>
            <person name="Robb F.T."/>
            <person name="Horikoshi K."/>
            <person name="Masuchi Y."/>
            <person name="Shizuya H."/>
            <person name="Kikuchi H."/>
        </authorList>
    </citation>
    <scope>NUCLEOTIDE SEQUENCE [LARGE SCALE GENOMIC DNA]</scope>
    <source>
        <strain>ATCC 700860 / DSM 12428 / JCM 9974 / NBRC 100139 / OT-3</strain>
    </source>
</reference>
<reference key="2">
    <citation type="journal article" date="2004" name="Acta Crystallogr. D">
        <title>Crystallization and preliminary crystallographic analysis of an acylphosphatase from the hyperthermophilic archaeon Pyrococcus horikoshii.</title>
        <authorList>
            <person name="Cheung Y.-Y."/>
            <person name="Allen M.D."/>
            <person name="Bycroft M."/>
            <person name="Wong K.-B."/>
        </authorList>
    </citation>
    <scope>X-RAY CRYSTALLOGRAPHY (1.6 ANGSTROMS)</scope>
</reference>
<reference key="3">
    <citation type="journal article" date="2004" name="Acta Crystallogr. D">
        <title>Cloning, purification, crystallization and preliminary crystallographic analysis of acylphosphatase from Pyrococcus horikoshii OT3.</title>
        <authorList>
            <person name="Miyazono K.I."/>
            <person name="Kudo N."/>
            <person name="Tanokura M."/>
        </authorList>
    </citation>
    <scope>X-RAY CRYSTALLOGRAPHY (1.72 ANGSTROMS)</scope>
</reference>
<reference key="4">
    <citation type="journal article" date="2005" name="Biochemistry">
        <title>Crystal structure of a hyperthermophilic archaeal acylphosphatase from Pyrococcus horikoshii -- structural insights into enzymatic catalysis, thermostability, and dimerization.</title>
        <authorList>
            <person name="Cheung Y.-Y."/>
            <person name="Lam S.Y."/>
            <person name="Chu W.-K."/>
            <person name="Allen M.D."/>
            <person name="Bycroft M."/>
            <person name="Wong K.-B."/>
        </authorList>
    </citation>
    <scope>X-RAY CRYSTALLOGRAPHY (1.5 ANGSTROMS)</scope>
    <scope>IDENTIFICATION BY MASS SPECTROMETRY</scope>
    <scope>SUBUNIT</scope>
    <scope>BIOPHYSICOCHEMICAL PROPERTIES</scope>
    <scope>ACTIVE SITE</scope>
    <source>
        <strain>ATCC 700860 / DSM 12428 / JCM 9974 / NBRC 100139 / OT-3</strain>
    </source>
</reference>
<gene>
    <name type="primary">acyP</name>
    <name type="ordered locus">PH0305.1</name>
</gene>
<accession>P84142</accession>
<dbReference type="EC" id="3.6.1.7"/>
<dbReference type="EMBL" id="BA000001">
    <property type="status" value="NOT_ANNOTATED_CDS"/>
    <property type="molecule type" value="Genomic_DNA"/>
</dbReference>
<dbReference type="RefSeq" id="WP_010884399.1">
    <property type="nucleotide sequence ID" value="NC_000961.1"/>
</dbReference>
<dbReference type="PDB" id="1V3Z">
    <property type="method" value="X-ray"/>
    <property type="resolution" value="1.72 A"/>
    <property type="chains" value="A/B=1-91"/>
</dbReference>
<dbReference type="PDB" id="1W2I">
    <property type="method" value="X-ray"/>
    <property type="resolution" value="1.50 A"/>
    <property type="chains" value="A/B=1-91"/>
</dbReference>
<dbReference type="PDB" id="2W4D">
    <property type="method" value="X-ray"/>
    <property type="resolution" value="2.40 A"/>
    <property type="chains" value="A/B/C/D/E/F=2-91"/>
</dbReference>
<dbReference type="PDB" id="3TNV">
    <property type="method" value="X-ray"/>
    <property type="resolution" value="1.60 A"/>
    <property type="chains" value="A=1-91"/>
</dbReference>
<dbReference type="PDBsum" id="1V3Z"/>
<dbReference type="PDBsum" id="1W2I"/>
<dbReference type="PDBsum" id="2W4D"/>
<dbReference type="PDBsum" id="3TNV"/>
<dbReference type="SMR" id="P84142"/>
<dbReference type="GeneID" id="1444186"/>
<dbReference type="OrthoDB" id="6643at2157"/>
<dbReference type="BRENDA" id="3.6.1.7">
    <property type="organism ID" value="5244"/>
</dbReference>
<dbReference type="SABIO-RK" id="P84142"/>
<dbReference type="EvolutionaryTrace" id="P84142"/>
<dbReference type="Proteomes" id="UP000000752">
    <property type="component" value="Chromosome"/>
</dbReference>
<dbReference type="GO" id="GO:0003998">
    <property type="term" value="F:acylphosphatase activity"/>
    <property type="evidence" value="ECO:0000250"/>
    <property type="project" value="UniProtKB"/>
</dbReference>
<dbReference type="GO" id="GO:0016787">
    <property type="term" value="F:hydrolase activity"/>
    <property type="evidence" value="ECO:0000250"/>
    <property type="project" value="UniProtKB"/>
</dbReference>
<dbReference type="FunFam" id="3.30.70.100:FF:000012">
    <property type="entry name" value="Acylphosphatase"/>
    <property type="match status" value="1"/>
</dbReference>
<dbReference type="Gene3D" id="3.30.70.100">
    <property type="match status" value="1"/>
</dbReference>
<dbReference type="InterPro" id="IPR020456">
    <property type="entry name" value="Acylphosphatase"/>
</dbReference>
<dbReference type="InterPro" id="IPR001792">
    <property type="entry name" value="Acylphosphatase-like_dom"/>
</dbReference>
<dbReference type="InterPro" id="IPR036046">
    <property type="entry name" value="Acylphosphatase-like_dom_sf"/>
</dbReference>
<dbReference type="InterPro" id="IPR017968">
    <property type="entry name" value="Acylphosphatase_CS"/>
</dbReference>
<dbReference type="NCBIfam" id="NF011010">
    <property type="entry name" value="PRK14436.1"/>
    <property type="match status" value="1"/>
</dbReference>
<dbReference type="NCBIfam" id="NF011016">
    <property type="entry name" value="PRK14444.1"/>
    <property type="match status" value="1"/>
</dbReference>
<dbReference type="PANTHER" id="PTHR47268">
    <property type="entry name" value="ACYLPHOSPHATASE"/>
    <property type="match status" value="1"/>
</dbReference>
<dbReference type="PANTHER" id="PTHR47268:SF4">
    <property type="entry name" value="ACYLPHOSPHATASE"/>
    <property type="match status" value="1"/>
</dbReference>
<dbReference type="Pfam" id="PF00708">
    <property type="entry name" value="Acylphosphatase"/>
    <property type="match status" value="1"/>
</dbReference>
<dbReference type="PRINTS" id="PR00112">
    <property type="entry name" value="ACYLPHPHTASE"/>
</dbReference>
<dbReference type="SUPFAM" id="SSF54975">
    <property type="entry name" value="Acylphosphatase/BLUF domain-like"/>
    <property type="match status" value="1"/>
</dbReference>
<dbReference type="PROSITE" id="PS00150">
    <property type="entry name" value="ACYLPHOSPHATASE_1"/>
    <property type="match status" value="1"/>
</dbReference>
<dbReference type="PROSITE" id="PS00151">
    <property type="entry name" value="ACYLPHOSPHATASE_2"/>
    <property type="match status" value="1"/>
</dbReference>
<dbReference type="PROSITE" id="PS51160">
    <property type="entry name" value="ACYLPHOSPHATASE_3"/>
    <property type="match status" value="1"/>
</dbReference>
<sequence>MAIVRAHLKIYGRVQGVGFRWSMQREARKLGVNGWVRNLPDGSVEAVLEGDEERVEALIGWAHQGPPLARVTRVEVKWEQPKGEKGFRIVG</sequence>
<keyword id="KW-0002">3D-structure</keyword>
<keyword id="KW-0378">Hydrolase</keyword>
<organism>
    <name type="scientific">Pyrococcus horikoshii (strain ATCC 700860 / DSM 12428 / JCM 9974 / NBRC 100139 / OT-3)</name>
    <dbReference type="NCBI Taxonomy" id="70601"/>
    <lineage>
        <taxon>Archaea</taxon>
        <taxon>Methanobacteriati</taxon>
        <taxon>Methanobacteriota</taxon>
        <taxon>Thermococci</taxon>
        <taxon>Thermococcales</taxon>
        <taxon>Thermococcaceae</taxon>
        <taxon>Pyrococcus</taxon>
    </lineage>
</organism>
<comment type="catalytic activity">
    <reaction>
        <text>an acyl phosphate + H2O = a carboxylate + phosphate + H(+)</text>
        <dbReference type="Rhea" id="RHEA:14965"/>
        <dbReference type="ChEBI" id="CHEBI:15377"/>
        <dbReference type="ChEBI" id="CHEBI:15378"/>
        <dbReference type="ChEBI" id="CHEBI:29067"/>
        <dbReference type="ChEBI" id="CHEBI:43474"/>
        <dbReference type="ChEBI" id="CHEBI:59918"/>
        <dbReference type="EC" id="3.6.1.7"/>
    </reaction>
</comment>
<comment type="biophysicochemical properties">
    <kinetics>
        <KM evidence="2">0.12 mM for benzoylphosphate at 25 degrees Celsius</KM>
    </kinetics>
    <phDependence>
        <text evidence="2">Optimum pH is 5.3 at 25 degrees Celsius.</text>
    </phDependence>
    <temperatureDependence>
        <text evidence="2">Optimum temperature is 98 degrees Celsius. Poorly active at 25 degrees Celsius. Thermostable up to 100 degrees Celsius.</text>
    </temperatureDependence>
</comment>
<comment type="subunit">
    <text evidence="2">Monomer.</text>
</comment>
<comment type="similarity">
    <text evidence="3">Belongs to the acylphosphatase family.</text>
</comment>
<proteinExistence type="evidence at protein level"/>
<feature type="chain" id="PRO_0000158560" description="Acylphosphatase">
    <location>
        <begin position="1"/>
        <end position="91"/>
    </location>
</feature>
<feature type="domain" description="Acylphosphatase-like" evidence="1">
    <location>
        <begin position="5"/>
        <end position="91"/>
    </location>
</feature>
<feature type="active site" evidence="2">
    <location>
        <position position="20"/>
    </location>
</feature>
<feature type="active site" evidence="2">
    <location>
        <position position="38"/>
    </location>
</feature>
<feature type="strand" evidence="4">
    <location>
        <begin position="3"/>
        <end position="13"/>
    </location>
</feature>
<feature type="strand" evidence="4">
    <location>
        <begin position="15"/>
        <end position="18"/>
    </location>
</feature>
<feature type="helix" evidence="4">
    <location>
        <begin position="19"/>
        <end position="30"/>
    </location>
</feature>
<feature type="strand" evidence="4">
    <location>
        <begin position="33"/>
        <end position="38"/>
    </location>
</feature>
<feature type="strand" evidence="4">
    <location>
        <begin position="44"/>
        <end position="51"/>
    </location>
</feature>
<feature type="helix" evidence="4">
    <location>
        <begin position="52"/>
        <end position="61"/>
    </location>
</feature>
<feature type="turn" evidence="4">
    <location>
        <begin position="62"/>
        <end position="64"/>
    </location>
</feature>
<feature type="strand" evidence="4">
    <location>
        <begin position="70"/>
        <end position="79"/>
    </location>
</feature>
<feature type="strand" evidence="4">
    <location>
        <begin position="86"/>
        <end position="89"/>
    </location>
</feature>